<comment type="function">
    <text evidence="2 3 5">Indole diterpene prenyltransferase; part of the gene cluster that mediates the biosynthesis of lolitrems, indole-diterpene mycotoxins that are potent tremorgens in mammals, and are synthesized by clavicipitaceous fungal endophytes in association with their grass hosts (PubMed:16765617, PubMed:22750140). The geranylgeranyl diphosphate (GGPP) synthase ltmG is proposed to catalyze the first step in lolitrem biosynthesis (PubMed:15991026, PubMed:16765617). LtmG catalyzes a series of iterative condensations of isopentenyl diphosphate (IPP) with dimethylallyl diphosphate (DMAPP), geranyl diphosphate (GPP), and farnesyl diphosphate (FPP), to form GGPP (PubMed:15991026, PubMed:16765617). GGPP then condenses with indole-3-glycerol phosphate to form 3-geranylgeranylindole, an acyclic intermediate, to be incorporated into paxilline (PubMed:16765617). Either ltmG or ltmC could be responsible for this step, as both are putative prenyl transferases (PubMed:16765617). The FAD-dependent monooxygenase ltmM then catalyzes the epoxidation of the two terminal alkenes of the geranylgeranyl moiety, which is subsequently cyclized by ltmB, to paspaline (PubMed:15991026, PubMed:16765617). The cytochrome P450 monooxygenases ltmQ and ltmP can sequentially oxidize paspaline to terpendole E and terpendole F (PubMed:22750140). Alternatively, ltmP converts paspaline to an intermediate which is oxidized by ltmQ to terpendole F (PubMed:22750140). LtmF, ltmK, ltmE and ltmJ appear to be unique to the epichloe endophytes (PubMed:15991026, PubMed:16765617). The prenyltransferase ltmF is involved in the 27-hydroxyl-O-prenylation (PubMed:22750140). The cytochrome P450 monooxygenase ltmK is required for the oxidative acetal ring formation (PubMed:22750140). The multi-functional prenyltransferase ltmE is required for C20- and C21-prenylations of the indole ring of paspalanes and acts together with the cytochrome P450 monooxygenase ltmJ to yield lolitremanes by multiple oxidations and ring closures (PubMed:22750140). The stereoisomer pairs of lolitriol and lolitrem N or lolitrem B and lolitrem F may be attributed to variations in the way in which ring closure can occur under the action of ltmJ (PubMed:22750140). While the major product of this pathway is lolitrem B, the prenyl transferases and cytochrome P450 monooxygenases identified in this pathway have a remarkable versatility in their regio- and stereo-specificities to generate a diverse range of metabolites that are products of a metabolic grid rather than a linear pathway (PubMed:22750140).</text>
</comment>
<comment type="pathway">
    <text evidence="5">Secondary metabolite biosynthesis.</text>
</comment>
<comment type="induction">
    <text evidence="4">Expression is down-regulated when the stress-activated mitogen-activated protein kinase (sakA) is deleted (PubMed:20519633).</text>
</comment>
<comment type="disruption phenotype">
    <text evidence="5">Leads to the accumulation of paspaline and 13-desoxypaxilline, but also lolitriol and a small amount of lolitrem J (PubMed:22750140).</text>
</comment>
<comment type="similarity">
    <text evidence="7">Belongs to the tryptophan dimethylallyltransferase family.</text>
</comment>
<feature type="chain" id="PRO_0000444328" description="Indole diterpene prenyltransferase ltmF">
    <location>
        <begin position="1"/>
        <end position="439"/>
    </location>
</feature>
<feature type="binding site" evidence="1">
    <location>
        <position position="95"/>
    </location>
    <ligand>
        <name>substrate</name>
    </ligand>
</feature>
<feature type="binding site" evidence="1">
    <location>
        <position position="193"/>
    </location>
    <ligand>
        <name>substrate</name>
    </ligand>
</feature>
<feature type="binding site" evidence="1">
    <location>
        <position position="262"/>
    </location>
    <ligand>
        <name>substrate</name>
    </ligand>
</feature>
<feature type="binding site" evidence="1">
    <location>
        <position position="264"/>
    </location>
    <ligand>
        <name>substrate</name>
    </ligand>
</feature>
<feature type="binding site" evidence="1">
    <location>
        <position position="266"/>
    </location>
    <ligand>
        <name>substrate</name>
    </ligand>
</feature>
<feature type="binding site" evidence="1">
    <location>
        <position position="350"/>
    </location>
    <ligand>
        <name>substrate</name>
    </ligand>
</feature>
<reference key="1">
    <citation type="journal article" date="2006" name="Fungal Genet. Biol.">
        <title>A complex gene cluster for indole-diterpene biosynthesis in the grass endophyte Neotyphodium lolii.</title>
        <authorList>
            <person name="Young C.A."/>
            <person name="Felitti S."/>
            <person name="Shields K."/>
            <person name="Spangenberg G."/>
            <person name="Johnson R.D."/>
            <person name="Bryan G.T."/>
            <person name="Saikia S."/>
            <person name="Scott B."/>
        </authorList>
    </citation>
    <scope>NUCLEOTIDE SEQUENCE [GENOMIC DNA]</scope>
    <source>
        <strain>Lp19</strain>
    </source>
</reference>
<reference key="2">
    <citation type="journal article" date="2005" name="Mol. Genet. Genomics">
        <title>Molecular cloning and genetic analysis of a symbiosis-expressed gene cluster for lolitrem biosynthesis from a mutualistic endophyte of perennial ryegrass.</title>
        <authorList>
            <person name="Young C.A."/>
            <person name="Bryant M.K."/>
            <person name="Christensen M.J."/>
            <person name="Tapper B.A."/>
            <person name="Bryan G.T."/>
            <person name="Scott B."/>
        </authorList>
    </citation>
    <scope>FUNCTION</scope>
    <source>
        <strain>Lp19</strain>
    </source>
</reference>
<reference key="3">
    <citation type="journal article" date="2010" name="Plant Physiol.">
        <title>Disruption of signaling in a fungal-grass symbiosis leads to pathogenesis.</title>
        <authorList>
            <person name="Eaton C.J."/>
            <person name="Cox M.P."/>
            <person name="Ambrose B."/>
            <person name="Becker M."/>
            <person name="Hesse U."/>
            <person name="Schardl C.L."/>
            <person name="Scott B."/>
        </authorList>
    </citation>
    <scope>INDUCTION</scope>
</reference>
<reference key="4">
    <citation type="journal article" date="2012" name="FEBS Lett.">
        <title>Functional analysis of an indole-diterpene gene cluster for lolitrem B biosynthesis in the grass endosymbiont Epichloe festucae.</title>
        <authorList>
            <person name="Saikia S."/>
            <person name="Takemoto D."/>
            <person name="Tapper B.A."/>
            <person name="Lane G.A."/>
            <person name="Fraser K."/>
            <person name="Scott B."/>
        </authorList>
    </citation>
    <scope>FUNCTION</scope>
    <scope>DISRUPTION PHENOTYPE</scope>
    <scope>PATHWAY</scope>
</reference>
<accession>Q15FB3</accession>
<organism>
    <name type="scientific">Epichloe festucae var. lolii</name>
    <name type="common">Neotyphodium lolii</name>
    <name type="synonym">Acremonium lolii</name>
    <dbReference type="NCBI Taxonomy" id="73839"/>
    <lineage>
        <taxon>Eukaryota</taxon>
        <taxon>Fungi</taxon>
        <taxon>Dikarya</taxon>
        <taxon>Ascomycota</taxon>
        <taxon>Pezizomycotina</taxon>
        <taxon>Sordariomycetes</taxon>
        <taxon>Hypocreomycetidae</taxon>
        <taxon>Hypocreales</taxon>
        <taxon>Clavicipitaceae</taxon>
        <taxon>Epichloe</taxon>
    </lineage>
</organism>
<protein>
    <recommendedName>
        <fullName evidence="6">Indole diterpene prenyltransferase ltmF</fullName>
        <ecNumber evidence="8">2.5.1.-</ecNumber>
    </recommendedName>
    <alternativeName>
        <fullName evidence="6">Lolitrem B biosynthesis cluster 2 protein F</fullName>
    </alternativeName>
</protein>
<proteinExistence type="evidence at transcript level"/>
<name>LTMF_EPIFI</name>
<gene>
    <name evidence="6" type="primary">ltmF</name>
</gene>
<evidence type="ECO:0000250" key="1">
    <source>
        <dbReference type="UniProtKB" id="Q50EL0"/>
    </source>
</evidence>
<evidence type="ECO:0000269" key="2">
    <source>
    </source>
</evidence>
<evidence type="ECO:0000269" key="3">
    <source>
    </source>
</evidence>
<evidence type="ECO:0000269" key="4">
    <source>
    </source>
</evidence>
<evidence type="ECO:0000269" key="5">
    <source>
    </source>
</evidence>
<evidence type="ECO:0000303" key="6">
    <source>
    </source>
</evidence>
<evidence type="ECO:0000305" key="7"/>
<evidence type="ECO:0000305" key="8">
    <source>
    </source>
</evidence>
<sequence length="439" mass="48987">MIAKNIELNGLDPATRALDILYWKNHCIKQLESLLCATDSYCTADKAAQLRILSELVLPNLGPRPSNATGPSYLTRSGSPIMLSLNTTSSKNCVRYCWEILGATGASNDDPLAVQVAKDVVASLSATFRLSTKWSETLLSNFAVTPDQARQVINMLPEWIQGFVPEGMECDFPKRIPFAMTSFDLNGSNVAMKLYVNPRVKEILTGTPSSDLVWEFLRNLTPEMKPRAVDLLERFITDNSGPSAIELVGIDCVDDAHLSNARVKLYVHTMSSSFNTVKNYVTLGGAIWDEQTQKGLGILQSIWHLLLQEPEGISDNGFDKPVNDSSMLCQKLYFSFELRPGTDFPQVKTYVPTWNYLRTDGETIQNYEAIFRACDHPWGEDRTYGKIFQDAFGPATESRKKPIHCDASFLFTEETGVYQTLYFSPPIEGETEVQSNLVA</sequence>
<dbReference type="EC" id="2.5.1.-" evidence="8"/>
<dbReference type="EMBL" id="DQ443465">
    <property type="protein sequence ID" value="ABF20224.1"/>
    <property type="molecule type" value="Genomic_DNA"/>
</dbReference>
<dbReference type="SMR" id="Q15FB3"/>
<dbReference type="GO" id="GO:0016765">
    <property type="term" value="F:transferase activity, transferring alkyl or aryl (other than methyl) groups"/>
    <property type="evidence" value="ECO:0007669"/>
    <property type="project" value="InterPro"/>
</dbReference>
<dbReference type="GO" id="GO:0009820">
    <property type="term" value="P:alkaloid metabolic process"/>
    <property type="evidence" value="ECO:0007669"/>
    <property type="project" value="InterPro"/>
</dbReference>
<dbReference type="CDD" id="cd13929">
    <property type="entry name" value="PT-DMATS_CymD"/>
    <property type="match status" value="1"/>
</dbReference>
<dbReference type="InterPro" id="IPR033964">
    <property type="entry name" value="Aro_prenylTrfase"/>
</dbReference>
<dbReference type="InterPro" id="IPR017795">
    <property type="entry name" value="Aro_prenylTrfase_DMATS"/>
</dbReference>
<dbReference type="NCBIfam" id="TIGR03429">
    <property type="entry name" value="arom_pren_DMATS"/>
    <property type="match status" value="1"/>
</dbReference>
<dbReference type="PANTHER" id="PTHR40627:SF5">
    <property type="entry name" value="INDOLE PRENYLTRANSFERASE TDIB"/>
    <property type="match status" value="1"/>
</dbReference>
<dbReference type="PANTHER" id="PTHR40627">
    <property type="entry name" value="INDOLE PRENYLTRANSFERASE TDIB-RELATED"/>
    <property type="match status" value="1"/>
</dbReference>
<dbReference type="Pfam" id="PF11991">
    <property type="entry name" value="Trp_DMAT"/>
    <property type="match status" value="1"/>
</dbReference>
<dbReference type="SFLD" id="SFLDS00036">
    <property type="entry name" value="Aromatic_Prenyltransferase"/>
    <property type="match status" value="1"/>
</dbReference>
<keyword id="KW-0808">Transferase</keyword>